<feature type="chain" id="PRO_1000185075" description="Malate dehydrogenase">
    <location>
        <begin position="1"/>
        <end position="312"/>
    </location>
</feature>
<feature type="active site" description="Proton acceptor" evidence="1">
    <location>
        <position position="177"/>
    </location>
</feature>
<feature type="binding site" evidence="1">
    <location>
        <begin position="7"/>
        <end position="13"/>
    </location>
    <ligand>
        <name>NAD(+)</name>
        <dbReference type="ChEBI" id="CHEBI:57540"/>
    </ligand>
</feature>
<feature type="binding site" evidence="1">
    <location>
        <position position="34"/>
    </location>
    <ligand>
        <name>NAD(+)</name>
        <dbReference type="ChEBI" id="CHEBI:57540"/>
    </ligand>
</feature>
<feature type="binding site" evidence="1">
    <location>
        <position position="81"/>
    </location>
    <ligand>
        <name>substrate</name>
    </ligand>
</feature>
<feature type="binding site" evidence="1">
    <location>
        <position position="87"/>
    </location>
    <ligand>
        <name>substrate</name>
    </ligand>
</feature>
<feature type="binding site" evidence="1">
    <location>
        <position position="94"/>
    </location>
    <ligand>
        <name>NAD(+)</name>
        <dbReference type="ChEBI" id="CHEBI:57540"/>
    </ligand>
</feature>
<feature type="binding site" evidence="1">
    <location>
        <begin position="117"/>
        <end position="119"/>
    </location>
    <ligand>
        <name>NAD(+)</name>
        <dbReference type="ChEBI" id="CHEBI:57540"/>
    </ligand>
</feature>
<feature type="binding site" evidence="1">
    <location>
        <position position="119"/>
    </location>
    <ligand>
        <name>substrate</name>
    </ligand>
</feature>
<feature type="binding site" evidence="1">
    <location>
        <position position="153"/>
    </location>
    <ligand>
        <name>substrate</name>
    </ligand>
</feature>
<feature type="binding site" evidence="1">
    <location>
        <position position="227"/>
    </location>
    <ligand>
        <name>NAD(+)</name>
        <dbReference type="ChEBI" id="CHEBI:57540"/>
    </ligand>
</feature>
<sequence length="312" mass="32337">MKVAVLGAAGGIGQALALLLKTQLPSGSELSLYDIAPVTPGVAVDLSHIPTAVKIKGFSGEDATPALEGADVVLISAGVARKPGMDRSDLFNVNAGIVKNLVQQVAKTCPKACIGIITNPVNTTVAIAAEVLKKAGVYDKNKLFGVTTLDIIRSNTFVAELKGKQPGEVEVPVIGGHSGVTILPLLSQVPGVSFTEQEVADLTKRIQNAGTEVVEAKAGGGSATLSMGQAAARFGLSLVRALQGEQGVVECAYVEGDGQYARFFSQPLLLGKNGVEERKSIGTLSAFEQNALEGMLDTLKKDIALGEEFVNK</sequence>
<evidence type="ECO:0000255" key="1">
    <source>
        <dbReference type="HAMAP-Rule" id="MF_01516"/>
    </source>
</evidence>
<proteinExistence type="inferred from homology"/>
<dbReference type="EC" id="1.1.1.37" evidence="1"/>
<dbReference type="EMBL" id="FM180568">
    <property type="protein sequence ID" value="CAS11055.1"/>
    <property type="molecule type" value="Genomic_DNA"/>
</dbReference>
<dbReference type="RefSeq" id="WP_001295272.1">
    <property type="nucleotide sequence ID" value="NC_011601.1"/>
</dbReference>
<dbReference type="SMR" id="B7UJW8"/>
<dbReference type="GeneID" id="93778749"/>
<dbReference type="KEGG" id="ecg:E2348C_3507"/>
<dbReference type="HOGENOM" id="CLU_047181_0_1_6"/>
<dbReference type="Proteomes" id="UP000008205">
    <property type="component" value="Chromosome"/>
</dbReference>
<dbReference type="GO" id="GO:0005737">
    <property type="term" value="C:cytoplasm"/>
    <property type="evidence" value="ECO:0007669"/>
    <property type="project" value="TreeGrafter"/>
</dbReference>
<dbReference type="GO" id="GO:0030060">
    <property type="term" value="F:L-malate dehydrogenase (NAD+) activity"/>
    <property type="evidence" value="ECO:0007669"/>
    <property type="project" value="UniProtKB-UniRule"/>
</dbReference>
<dbReference type="GO" id="GO:0006108">
    <property type="term" value="P:malate metabolic process"/>
    <property type="evidence" value="ECO:0007669"/>
    <property type="project" value="InterPro"/>
</dbReference>
<dbReference type="GO" id="GO:0006099">
    <property type="term" value="P:tricarboxylic acid cycle"/>
    <property type="evidence" value="ECO:0007669"/>
    <property type="project" value="UniProtKB-UniRule"/>
</dbReference>
<dbReference type="CDD" id="cd01337">
    <property type="entry name" value="MDH_glyoxysomal_mitochondrial"/>
    <property type="match status" value="1"/>
</dbReference>
<dbReference type="FunFam" id="3.40.50.720:FF:000017">
    <property type="entry name" value="Malate dehydrogenase"/>
    <property type="match status" value="1"/>
</dbReference>
<dbReference type="FunFam" id="3.90.110.10:FF:000001">
    <property type="entry name" value="Malate dehydrogenase"/>
    <property type="match status" value="1"/>
</dbReference>
<dbReference type="Gene3D" id="3.90.110.10">
    <property type="entry name" value="Lactate dehydrogenase/glycoside hydrolase, family 4, C-terminal"/>
    <property type="match status" value="1"/>
</dbReference>
<dbReference type="Gene3D" id="3.40.50.720">
    <property type="entry name" value="NAD(P)-binding Rossmann-like Domain"/>
    <property type="match status" value="1"/>
</dbReference>
<dbReference type="HAMAP" id="MF_01516">
    <property type="entry name" value="Malate_dehydrog_1"/>
    <property type="match status" value="1"/>
</dbReference>
<dbReference type="InterPro" id="IPR001557">
    <property type="entry name" value="L-lactate/malate_DH"/>
</dbReference>
<dbReference type="InterPro" id="IPR022383">
    <property type="entry name" value="Lactate/malate_DH_C"/>
</dbReference>
<dbReference type="InterPro" id="IPR001236">
    <property type="entry name" value="Lactate/malate_DH_N"/>
</dbReference>
<dbReference type="InterPro" id="IPR015955">
    <property type="entry name" value="Lactate_DH/Glyco_Ohase_4_C"/>
</dbReference>
<dbReference type="InterPro" id="IPR001252">
    <property type="entry name" value="Malate_DH_AS"/>
</dbReference>
<dbReference type="InterPro" id="IPR010097">
    <property type="entry name" value="Malate_DH_type1"/>
</dbReference>
<dbReference type="InterPro" id="IPR023958">
    <property type="entry name" value="Malate_DH_type1_bac"/>
</dbReference>
<dbReference type="InterPro" id="IPR036291">
    <property type="entry name" value="NAD(P)-bd_dom_sf"/>
</dbReference>
<dbReference type="NCBIfam" id="TIGR01772">
    <property type="entry name" value="MDH_euk_gproteo"/>
    <property type="match status" value="1"/>
</dbReference>
<dbReference type="PANTHER" id="PTHR11540">
    <property type="entry name" value="MALATE AND LACTATE DEHYDROGENASE"/>
    <property type="match status" value="1"/>
</dbReference>
<dbReference type="PANTHER" id="PTHR11540:SF16">
    <property type="entry name" value="MALATE DEHYDROGENASE, MITOCHONDRIAL"/>
    <property type="match status" value="1"/>
</dbReference>
<dbReference type="Pfam" id="PF02866">
    <property type="entry name" value="Ldh_1_C"/>
    <property type="match status" value="1"/>
</dbReference>
<dbReference type="Pfam" id="PF00056">
    <property type="entry name" value="Ldh_1_N"/>
    <property type="match status" value="1"/>
</dbReference>
<dbReference type="PIRSF" id="PIRSF000102">
    <property type="entry name" value="Lac_mal_DH"/>
    <property type="match status" value="1"/>
</dbReference>
<dbReference type="SUPFAM" id="SSF56327">
    <property type="entry name" value="LDH C-terminal domain-like"/>
    <property type="match status" value="1"/>
</dbReference>
<dbReference type="SUPFAM" id="SSF51735">
    <property type="entry name" value="NAD(P)-binding Rossmann-fold domains"/>
    <property type="match status" value="1"/>
</dbReference>
<dbReference type="PROSITE" id="PS00068">
    <property type="entry name" value="MDH"/>
    <property type="match status" value="1"/>
</dbReference>
<organism>
    <name type="scientific">Escherichia coli O127:H6 (strain E2348/69 / EPEC)</name>
    <dbReference type="NCBI Taxonomy" id="574521"/>
    <lineage>
        <taxon>Bacteria</taxon>
        <taxon>Pseudomonadati</taxon>
        <taxon>Pseudomonadota</taxon>
        <taxon>Gammaproteobacteria</taxon>
        <taxon>Enterobacterales</taxon>
        <taxon>Enterobacteriaceae</taxon>
        <taxon>Escherichia</taxon>
    </lineage>
</organism>
<accession>B7UJW8</accession>
<gene>
    <name evidence="1" type="primary">mdh</name>
    <name type="ordered locus">E2348C_3507</name>
</gene>
<reference key="1">
    <citation type="journal article" date="2009" name="J. Bacteriol.">
        <title>Complete genome sequence and comparative genome analysis of enteropathogenic Escherichia coli O127:H6 strain E2348/69.</title>
        <authorList>
            <person name="Iguchi A."/>
            <person name="Thomson N.R."/>
            <person name="Ogura Y."/>
            <person name="Saunders D."/>
            <person name="Ooka T."/>
            <person name="Henderson I.R."/>
            <person name="Harris D."/>
            <person name="Asadulghani M."/>
            <person name="Kurokawa K."/>
            <person name="Dean P."/>
            <person name="Kenny B."/>
            <person name="Quail M.A."/>
            <person name="Thurston S."/>
            <person name="Dougan G."/>
            <person name="Hayashi T."/>
            <person name="Parkhill J."/>
            <person name="Frankel G."/>
        </authorList>
    </citation>
    <scope>NUCLEOTIDE SEQUENCE [LARGE SCALE GENOMIC DNA]</scope>
    <source>
        <strain>E2348/69 / EPEC</strain>
    </source>
</reference>
<comment type="function">
    <text evidence="1">Catalyzes the reversible oxidation of malate to oxaloacetate.</text>
</comment>
<comment type="catalytic activity">
    <reaction evidence="1">
        <text>(S)-malate + NAD(+) = oxaloacetate + NADH + H(+)</text>
        <dbReference type="Rhea" id="RHEA:21432"/>
        <dbReference type="ChEBI" id="CHEBI:15378"/>
        <dbReference type="ChEBI" id="CHEBI:15589"/>
        <dbReference type="ChEBI" id="CHEBI:16452"/>
        <dbReference type="ChEBI" id="CHEBI:57540"/>
        <dbReference type="ChEBI" id="CHEBI:57945"/>
        <dbReference type="EC" id="1.1.1.37"/>
    </reaction>
</comment>
<comment type="subunit">
    <text evidence="1">Homodimer.</text>
</comment>
<comment type="similarity">
    <text evidence="1">Belongs to the LDH/MDH superfamily. MDH type 1 family.</text>
</comment>
<protein>
    <recommendedName>
        <fullName evidence="1">Malate dehydrogenase</fullName>
        <ecNumber evidence="1">1.1.1.37</ecNumber>
    </recommendedName>
</protein>
<name>MDH_ECO27</name>
<keyword id="KW-0520">NAD</keyword>
<keyword id="KW-0560">Oxidoreductase</keyword>
<keyword id="KW-1185">Reference proteome</keyword>
<keyword id="KW-0816">Tricarboxylic acid cycle</keyword>